<keyword id="KW-0963">Cytoplasm</keyword>
<keyword id="KW-0223">Dioxygenase</keyword>
<keyword id="KW-0408">Iron</keyword>
<keyword id="KW-0479">Metal-binding</keyword>
<keyword id="KW-0539">Nucleus</keyword>
<keyword id="KW-0560">Oxidoreductase</keyword>
<keyword id="KW-1185">Reference proteome</keyword>
<reference key="1">
    <citation type="journal article" date="2013" name="Nature">
        <title>The zebrafish reference genome sequence and its relationship to the human genome.</title>
        <authorList>
            <person name="Howe K."/>
            <person name="Clark M.D."/>
            <person name="Torroja C.F."/>
            <person name="Torrance J."/>
            <person name="Berthelot C."/>
            <person name="Muffato M."/>
            <person name="Collins J.E."/>
            <person name="Humphray S."/>
            <person name="McLaren K."/>
            <person name="Matthews L."/>
            <person name="McLaren S."/>
            <person name="Sealy I."/>
            <person name="Caccamo M."/>
            <person name="Churcher C."/>
            <person name="Scott C."/>
            <person name="Barrett J.C."/>
            <person name="Koch R."/>
            <person name="Rauch G.J."/>
            <person name="White S."/>
            <person name="Chow W."/>
            <person name="Kilian B."/>
            <person name="Quintais L.T."/>
            <person name="Guerra-Assuncao J.A."/>
            <person name="Zhou Y."/>
            <person name="Gu Y."/>
            <person name="Yen J."/>
            <person name="Vogel J.H."/>
            <person name="Eyre T."/>
            <person name="Redmond S."/>
            <person name="Banerjee R."/>
            <person name="Chi J."/>
            <person name="Fu B."/>
            <person name="Langley E."/>
            <person name="Maguire S.F."/>
            <person name="Laird G.K."/>
            <person name="Lloyd D."/>
            <person name="Kenyon E."/>
            <person name="Donaldson S."/>
            <person name="Sehra H."/>
            <person name="Almeida-King J."/>
            <person name="Loveland J."/>
            <person name="Trevanion S."/>
            <person name="Jones M."/>
            <person name="Quail M."/>
            <person name="Willey D."/>
            <person name="Hunt A."/>
            <person name="Burton J."/>
            <person name="Sims S."/>
            <person name="McLay K."/>
            <person name="Plumb B."/>
            <person name="Davis J."/>
            <person name="Clee C."/>
            <person name="Oliver K."/>
            <person name="Clark R."/>
            <person name="Riddle C."/>
            <person name="Elliot D."/>
            <person name="Threadgold G."/>
            <person name="Harden G."/>
            <person name="Ware D."/>
            <person name="Begum S."/>
            <person name="Mortimore B."/>
            <person name="Kerry G."/>
            <person name="Heath P."/>
            <person name="Phillimore B."/>
            <person name="Tracey A."/>
            <person name="Corby N."/>
            <person name="Dunn M."/>
            <person name="Johnson C."/>
            <person name="Wood J."/>
            <person name="Clark S."/>
            <person name="Pelan S."/>
            <person name="Griffiths G."/>
            <person name="Smith M."/>
            <person name="Glithero R."/>
            <person name="Howden P."/>
            <person name="Barker N."/>
            <person name="Lloyd C."/>
            <person name="Stevens C."/>
            <person name="Harley J."/>
            <person name="Holt K."/>
            <person name="Panagiotidis G."/>
            <person name="Lovell J."/>
            <person name="Beasley H."/>
            <person name="Henderson C."/>
            <person name="Gordon D."/>
            <person name="Auger K."/>
            <person name="Wright D."/>
            <person name="Collins J."/>
            <person name="Raisen C."/>
            <person name="Dyer L."/>
            <person name="Leung K."/>
            <person name="Robertson L."/>
            <person name="Ambridge K."/>
            <person name="Leongamornlert D."/>
            <person name="McGuire S."/>
            <person name="Gilderthorp R."/>
            <person name="Griffiths C."/>
            <person name="Manthravadi D."/>
            <person name="Nichol S."/>
            <person name="Barker G."/>
            <person name="Whitehead S."/>
            <person name="Kay M."/>
            <person name="Brown J."/>
            <person name="Murnane C."/>
            <person name="Gray E."/>
            <person name="Humphries M."/>
            <person name="Sycamore N."/>
            <person name="Barker D."/>
            <person name="Saunders D."/>
            <person name="Wallis J."/>
            <person name="Babbage A."/>
            <person name="Hammond S."/>
            <person name="Mashreghi-Mohammadi M."/>
            <person name="Barr L."/>
            <person name="Martin S."/>
            <person name="Wray P."/>
            <person name="Ellington A."/>
            <person name="Matthews N."/>
            <person name="Ellwood M."/>
            <person name="Woodmansey R."/>
            <person name="Clark G."/>
            <person name="Cooper J."/>
            <person name="Tromans A."/>
            <person name="Grafham D."/>
            <person name="Skuce C."/>
            <person name="Pandian R."/>
            <person name="Andrews R."/>
            <person name="Harrison E."/>
            <person name="Kimberley A."/>
            <person name="Garnett J."/>
            <person name="Fosker N."/>
            <person name="Hall R."/>
            <person name="Garner P."/>
            <person name="Kelly D."/>
            <person name="Bird C."/>
            <person name="Palmer S."/>
            <person name="Gehring I."/>
            <person name="Berger A."/>
            <person name="Dooley C.M."/>
            <person name="Ersan-Urun Z."/>
            <person name="Eser C."/>
            <person name="Geiger H."/>
            <person name="Geisler M."/>
            <person name="Karotki L."/>
            <person name="Kirn A."/>
            <person name="Konantz J."/>
            <person name="Konantz M."/>
            <person name="Oberlander M."/>
            <person name="Rudolph-Geiger S."/>
            <person name="Teucke M."/>
            <person name="Lanz C."/>
            <person name="Raddatz G."/>
            <person name="Osoegawa K."/>
            <person name="Zhu B."/>
            <person name="Rapp A."/>
            <person name="Widaa S."/>
            <person name="Langford C."/>
            <person name="Yang F."/>
            <person name="Schuster S.C."/>
            <person name="Carter N.P."/>
            <person name="Harrow J."/>
            <person name="Ning Z."/>
            <person name="Herrero J."/>
            <person name="Searle S.M."/>
            <person name="Enright A."/>
            <person name="Geisler R."/>
            <person name="Plasterk R.H."/>
            <person name="Lee C."/>
            <person name="Westerfield M."/>
            <person name="de Jong P.J."/>
            <person name="Zon L.I."/>
            <person name="Postlethwait J.H."/>
            <person name="Nusslein-Volhard C."/>
            <person name="Hubbard T.J."/>
            <person name="Roest Crollius H."/>
            <person name="Rogers J."/>
            <person name="Stemple D.L."/>
        </authorList>
    </citation>
    <scope>NUCLEOTIDE SEQUENCE [LARGE SCALE GENOMIC DNA]</scope>
    <source>
        <strain>Tuebingen</strain>
    </source>
</reference>
<reference key="2">
    <citation type="submission" date="2004-06" db="EMBL/GenBank/DDBJ databases">
        <authorList>
            <consortium name="NIH - Zebrafish Gene Collection (ZGC) project"/>
        </authorList>
    </citation>
    <scope>NUCLEOTIDE SEQUENCE [LARGE SCALE MRNA]</scope>
    <source>
        <tissue>Embryo</tissue>
    </source>
</reference>
<dbReference type="EC" id="1.14.11.-" evidence="1"/>
<dbReference type="EMBL" id="BX005407">
    <property type="protein sequence ID" value="CAK04553.1"/>
    <property type="molecule type" value="Genomic_DNA"/>
</dbReference>
<dbReference type="EMBL" id="BC071457">
    <property type="protein sequence ID" value="AAH71457.1"/>
    <property type="molecule type" value="mRNA"/>
</dbReference>
<dbReference type="RefSeq" id="NP_001005390.1">
    <property type="nucleotide sequence ID" value="NM_001005390.1"/>
</dbReference>
<dbReference type="SMR" id="Q6IQE9"/>
<dbReference type="FunCoup" id="Q6IQE9">
    <property type="interactions" value="1537"/>
</dbReference>
<dbReference type="STRING" id="7955.ENSDARP00000098832"/>
<dbReference type="PaxDb" id="7955-ENSDARP00000098832"/>
<dbReference type="DNASU" id="317736"/>
<dbReference type="Ensembl" id="ENSDART00000111414">
    <property type="protein sequence ID" value="ENSDARP00000098832"/>
    <property type="gene ID" value="ENSDARG00000077253"/>
</dbReference>
<dbReference type="GeneID" id="317736"/>
<dbReference type="KEGG" id="dre:317736"/>
<dbReference type="AGR" id="ZFIN:ZDB-GENE-060407-1"/>
<dbReference type="CTD" id="84964"/>
<dbReference type="ZFIN" id="ZDB-GENE-060407-1">
    <property type="gene designation" value="alkbh6"/>
</dbReference>
<dbReference type="eggNOG" id="KOG3200">
    <property type="taxonomic scope" value="Eukaryota"/>
</dbReference>
<dbReference type="HOGENOM" id="CLU_059836_2_0_1"/>
<dbReference type="InParanoid" id="Q6IQE9"/>
<dbReference type="OMA" id="KSPKTKW"/>
<dbReference type="OrthoDB" id="412814at2759"/>
<dbReference type="PhylomeDB" id="Q6IQE9"/>
<dbReference type="TreeFam" id="TF314467"/>
<dbReference type="PRO" id="PR:Q6IQE9"/>
<dbReference type="Proteomes" id="UP000000437">
    <property type="component" value="Chromosome 5"/>
</dbReference>
<dbReference type="Bgee" id="ENSDARG00000077253">
    <property type="expression patterns" value="Expressed in gastrula and 25 other cell types or tissues"/>
</dbReference>
<dbReference type="GO" id="GO:0005737">
    <property type="term" value="C:cytoplasm"/>
    <property type="evidence" value="ECO:0007669"/>
    <property type="project" value="UniProtKB-SubCell"/>
</dbReference>
<dbReference type="GO" id="GO:0005634">
    <property type="term" value="C:nucleus"/>
    <property type="evidence" value="ECO:0000318"/>
    <property type="project" value="GO_Central"/>
</dbReference>
<dbReference type="GO" id="GO:0051213">
    <property type="term" value="F:dioxygenase activity"/>
    <property type="evidence" value="ECO:0007669"/>
    <property type="project" value="UniProtKB-KW"/>
</dbReference>
<dbReference type="GO" id="GO:0046872">
    <property type="term" value="F:metal ion binding"/>
    <property type="evidence" value="ECO:0007669"/>
    <property type="project" value="UniProtKB-KW"/>
</dbReference>
<dbReference type="Gene3D" id="2.60.120.590">
    <property type="entry name" value="Alpha-ketoglutarate-dependent dioxygenase AlkB-like"/>
    <property type="match status" value="1"/>
</dbReference>
<dbReference type="InterPro" id="IPR027450">
    <property type="entry name" value="AlkB-like"/>
</dbReference>
<dbReference type="InterPro" id="IPR037151">
    <property type="entry name" value="AlkB-like_sf"/>
</dbReference>
<dbReference type="InterPro" id="IPR032862">
    <property type="entry name" value="ALKBH6"/>
</dbReference>
<dbReference type="InterPro" id="IPR005123">
    <property type="entry name" value="Oxoglu/Fe-dep_dioxygenase_dom"/>
</dbReference>
<dbReference type="PANTHER" id="PTHR46030">
    <property type="entry name" value="ALPHA-KETOGLUTARATE-DEPENDENT DIOXYGENASE ALKB HOMOLOG 6"/>
    <property type="match status" value="1"/>
</dbReference>
<dbReference type="PANTHER" id="PTHR46030:SF1">
    <property type="entry name" value="ALPHA-KETOGLUTARATE-DEPENDENT DIOXYGENASE ALKB HOMOLOG 6"/>
    <property type="match status" value="1"/>
</dbReference>
<dbReference type="Pfam" id="PF13532">
    <property type="entry name" value="2OG-FeII_Oxy_2"/>
    <property type="match status" value="1"/>
</dbReference>
<dbReference type="SUPFAM" id="SSF51197">
    <property type="entry name" value="Clavaminate synthase-like"/>
    <property type="match status" value="1"/>
</dbReference>
<dbReference type="PROSITE" id="PS51471">
    <property type="entry name" value="FE2OG_OXY"/>
    <property type="match status" value="1"/>
</dbReference>
<proteinExistence type="evidence at transcript level"/>
<name>ALKB6_DANRE</name>
<organism>
    <name type="scientific">Danio rerio</name>
    <name type="common">Zebrafish</name>
    <name type="synonym">Brachydanio rerio</name>
    <dbReference type="NCBI Taxonomy" id="7955"/>
    <lineage>
        <taxon>Eukaryota</taxon>
        <taxon>Metazoa</taxon>
        <taxon>Chordata</taxon>
        <taxon>Craniata</taxon>
        <taxon>Vertebrata</taxon>
        <taxon>Euteleostomi</taxon>
        <taxon>Actinopterygii</taxon>
        <taxon>Neopterygii</taxon>
        <taxon>Teleostei</taxon>
        <taxon>Ostariophysi</taxon>
        <taxon>Cypriniformes</taxon>
        <taxon>Danionidae</taxon>
        <taxon>Danioninae</taxon>
        <taxon>Danio</taxon>
    </lineage>
</organism>
<accession>Q6IQE9</accession>
<sequence>MANLCKRVVDLEKYIVKEAPPTVYYIPDFISEAEEEFLLQQVYRAPKPKWTQLSGRRLQNWGGLPNPKGMLAEKLPDWLLEYTEKISALGAFAGKTANHVLVNEYKPGEGIMPHEDGPLYHPTVTTITVGSHTLLDFYRPVCQAEPDAPQTEESRYMLSLLVQRKSLLILQDDMYKCYLHGIRGVCEDVLSEHVVNISSTGAQVGDTLPRSTRVSLTIRHVPKIIRANLFLGKK</sequence>
<evidence type="ECO:0000250" key="1">
    <source>
        <dbReference type="UniProtKB" id="Q3KRA9"/>
    </source>
</evidence>
<evidence type="ECO:0000255" key="2">
    <source>
        <dbReference type="PROSITE-ProRule" id="PRU00805"/>
    </source>
</evidence>
<evidence type="ECO:0000305" key="3"/>
<comment type="function">
    <text evidence="1">Probable Fe(2+)/2-oxoglutarate-dependent dioxygenase involved in oxidative demethylation of nucleic acids. Binds nucleic acids with a preference for ssDNA or ssRNA to other types of DNAs. May play a role in nucleic acid damage repair.</text>
</comment>
<comment type="cofactor">
    <cofactor evidence="2">
        <name>Fe(2+)</name>
        <dbReference type="ChEBI" id="CHEBI:29033"/>
    </cofactor>
    <text evidence="2">Binds 1 Fe(2+) ion per subunit.</text>
</comment>
<comment type="subcellular location">
    <subcellularLocation>
        <location evidence="1">Cytoplasm</location>
    </subcellularLocation>
    <subcellularLocation>
        <location evidence="1">Nucleus</location>
    </subcellularLocation>
</comment>
<comment type="similarity">
    <text evidence="3">Belongs to the alkB family.</text>
</comment>
<gene>
    <name type="primary">alkbh6</name>
    <name type="ORF">si:ch211-222c22.5</name>
</gene>
<protein>
    <recommendedName>
        <fullName>Probable RNA/DNA demethylase ALKBH6</fullName>
        <ecNumber evidence="1">1.14.11.-</ecNumber>
    </recommendedName>
    <alternativeName>
        <fullName>Alkylated DNA repair protein alkB homolog 6</fullName>
    </alternativeName>
    <alternativeName>
        <fullName>Alpha-ketoglutarate-dependent dioxygenase alkB homolog 6</fullName>
    </alternativeName>
</protein>
<feature type="chain" id="PRO_0000323718" description="Probable RNA/DNA demethylase ALKBH6">
    <location>
        <begin position="1"/>
        <end position="234"/>
    </location>
</feature>
<feature type="domain" description="Fe2OG dioxygenase" evidence="2">
    <location>
        <begin position="96"/>
        <end position="222"/>
    </location>
</feature>
<feature type="binding site" evidence="1">
    <location>
        <position position="103"/>
    </location>
    <ligand>
        <name>2-oxoglutarate</name>
        <dbReference type="ChEBI" id="CHEBI:16810"/>
    </ligand>
</feature>
<feature type="binding site" evidence="1">
    <location>
        <position position="105"/>
    </location>
    <ligand>
        <name>2-oxoglutarate</name>
        <dbReference type="ChEBI" id="CHEBI:16810"/>
    </ligand>
</feature>
<feature type="binding site" evidence="2">
    <location>
        <position position="114"/>
    </location>
    <ligand>
        <name>Fe cation</name>
        <dbReference type="ChEBI" id="CHEBI:24875"/>
        <note>catalytic</note>
    </ligand>
</feature>
<feature type="binding site" evidence="2">
    <location>
        <position position="116"/>
    </location>
    <ligand>
        <name>Fe cation</name>
        <dbReference type="ChEBI" id="CHEBI:24875"/>
        <note>catalytic</note>
    </ligand>
</feature>
<feature type="binding site" evidence="2">
    <location>
        <position position="180"/>
    </location>
    <ligand>
        <name>Fe cation</name>
        <dbReference type="ChEBI" id="CHEBI:24875"/>
        <note>catalytic</note>
    </ligand>
</feature>
<feature type="binding site" evidence="1">
    <location>
        <position position="213"/>
    </location>
    <ligand>
        <name>2-oxoglutarate</name>
        <dbReference type="ChEBI" id="CHEBI:16810"/>
    </ligand>
</feature>
<feature type="binding site" evidence="1">
    <location>
        <position position="215"/>
    </location>
    <ligand>
        <name>2-oxoglutarate</name>
        <dbReference type="ChEBI" id="CHEBI:16810"/>
    </ligand>
</feature>